<reference key="1">
    <citation type="submission" date="2006-03" db="EMBL/GenBank/DDBJ databases">
        <title>Complete sequence of Shewanella denitrificans OS217.</title>
        <authorList>
            <consortium name="US DOE Joint Genome Institute"/>
            <person name="Copeland A."/>
            <person name="Lucas S."/>
            <person name="Lapidus A."/>
            <person name="Barry K."/>
            <person name="Detter J.C."/>
            <person name="Glavina del Rio T."/>
            <person name="Hammon N."/>
            <person name="Israni S."/>
            <person name="Dalin E."/>
            <person name="Tice H."/>
            <person name="Pitluck S."/>
            <person name="Brettin T."/>
            <person name="Bruce D."/>
            <person name="Han C."/>
            <person name="Tapia R."/>
            <person name="Gilna P."/>
            <person name="Kiss H."/>
            <person name="Schmutz J."/>
            <person name="Larimer F."/>
            <person name="Land M."/>
            <person name="Hauser L."/>
            <person name="Kyrpides N."/>
            <person name="Lykidis A."/>
            <person name="Richardson P."/>
        </authorList>
    </citation>
    <scope>NUCLEOTIDE SEQUENCE [LARGE SCALE GENOMIC DNA]</scope>
    <source>
        <strain>OS217 / ATCC BAA-1090 / DSM 15013</strain>
    </source>
</reference>
<name>TPMT_SHEDO</name>
<protein>
    <recommendedName>
        <fullName evidence="1">Thiopurine S-methyltransferase</fullName>
        <ecNumber evidence="1">2.1.1.67</ecNumber>
    </recommendedName>
    <alternativeName>
        <fullName evidence="1">Thiopurine methyltransferase</fullName>
    </alternativeName>
</protein>
<sequence>MEPNFWHDKWHQQLIGFHQASVNALLLTHWQQLEIKPQGQVFVPLCGKSLDMCYLAELGHNVLGCELNLSAVEQFYAENQLTVTCEPIGEHQFFDCEQVQIWQGDIFTLAPKITQDISGFYDRAALIAWPESLRQAYVKQLAKLIPQGCRGLLVTLDYPQETLQGPPFAVSPTWVETHLSEYFDITLLACRDVLDDNPRFIKKDVPWLNESAYLLKRK</sequence>
<evidence type="ECO:0000255" key="1">
    <source>
        <dbReference type="HAMAP-Rule" id="MF_00812"/>
    </source>
</evidence>
<dbReference type="EC" id="2.1.1.67" evidence="1"/>
<dbReference type="EMBL" id="CP000302">
    <property type="protein sequence ID" value="ABE53833.1"/>
    <property type="molecule type" value="Genomic_DNA"/>
</dbReference>
<dbReference type="RefSeq" id="WP_011494999.1">
    <property type="nucleotide sequence ID" value="NC_007954.1"/>
</dbReference>
<dbReference type="SMR" id="Q12RU3"/>
<dbReference type="STRING" id="318161.Sden_0541"/>
<dbReference type="KEGG" id="sdn:Sden_0541"/>
<dbReference type="eggNOG" id="COG0500">
    <property type="taxonomic scope" value="Bacteria"/>
</dbReference>
<dbReference type="HOGENOM" id="CLU_085515_1_0_6"/>
<dbReference type="OrthoDB" id="9778208at2"/>
<dbReference type="Proteomes" id="UP000001982">
    <property type="component" value="Chromosome"/>
</dbReference>
<dbReference type="GO" id="GO:0005737">
    <property type="term" value="C:cytoplasm"/>
    <property type="evidence" value="ECO:0007669"/>
    <property type="project" value="UniProtKB-SubCell"/>
</dbReference>
<dbReference type="GO" id="GO:0008119">
    <property type="term" value="F:thiopurine S-methyltransferase activity"/>
    <property type="evidence" value="ECO:0007669"/>
    <property type="project" value="UniProtKB-UniRule"/>
</dbReference>
<dbReference type="GO" id="GO:0032259">
    <property type="term" value="P:methylation"/>
    <property type="evidence" value="ECO:0007669"/>
    <property type="project" value="UniProtKB-KW"/>
</dbReference>
<dbReference type="GO" id="GO:0010038">
    <property type="term" value="P:response to metal ion"/>
    <property type="evidence" value="ECO:0007669"/>
    <property type="project" value="InterPro"/>
</dbReference>
<dbReference type="FunFam" id="3.40.50.150:FF:000101">
    <property type="entry name" value="Thiopurine S-methyltransferase"/>
    <property type="match status" value="1"/>
</dbReference>
<dbReference type="Gene3D" id="3.40.50.150">
    <property type="entry name" value="Vaccinia Virus protein VP39"/>
    <property type="match status" value="1"/>
</dbReference>
<dbReference type="HAMAP" id="MF_00812">
    <property type="entry name" value="Thiopur_methtran"/>
    <property type="match status" value="1"/>
</dbReference>
<dbReference type="InterPro" id="IPR029063">
    <property type="entry name" value="SAM-dependent_MTases_sf"/>
</dbReference>
<dbReference type="InterPro" id="IPR022474">
    <property type="entry name" value="Thiopur_S-MeTfrase_Se/Te_detox"/>
</dbReference>
<dbReference type="InterPro" id="IPR025835">
    <property type="entry name" value="Thiopurine_S-MeTrfase"/>
</dbReference>
<dbReference type="InterPro" id="IPR008854">
    <property type="entry name" value="TPMT"/>
</dbReference>
<dbReference type="NCBIfam" id="NF009732">
    <property type="entry name" value="PRK13255.1"/>
    <property type="match status" value="1"/>
</dbReference>
<dbReference type="NCBIfam" id="TIGR03840">
    <property type="entry name" value="TMPT_Se_Te"/>
    <property type="match status" value="1"/>
</dbReference>
<dbReference type="PANTHER" id="PTHR10259">
    <property type="entry name" value="THIOPURINE S-METHYLTRANSFERASE"/>
    <property type="match status" value="1"/>
</dbReference>
<dbReference type="PANTHER" id="PTHR10259:SF11">
    <property type="entry name" value="THIOPURINE S-METHYLTRANSFERASE"/>
    <property type="match status" value="1"/>
</dbReference>
<dbReference type="Pfam" id="PF05724">
    <property type="entry name" value="TPMT"/>
    <property type="match status" value="1"/>
</dbReference>
<dbReference type="PIRSF" id="PIRSF023956">
    <property type="entry name" value="Thiopurine_S-methyltransferase"/>
    <property type="match status" value="1"/>
</dbReference>
<dbReference type="SUPFAM" id="SSF53335">
    <property type="entry name" value="S-adenosyl-L-methionine-dependent methyltransferases"/>
    <property type="match status" value="1"/>
</dbReference>
<dbReference type="PROSITE" id="PS51585">
    <property type="entry name" value="SAM_MT_TPMT"/>
    <property type="match status" value="1"/>
</dbReference>
<accession>Q12RU3</accession>
<feature type="chain" id="PRO_1000047219" description="Thiopurine S-methyltransferase">
    <location>
        <begin position="1"/>
        <end position="218"/>
    </location>
</feature>
<feature type="binding site" evidence="1">
    <location>
        <position position="10"/>
    </location>
    <ligand>
        <name>S-adenosyl-L-methionine</name>
        <dbReference type="ChEBI" id="CHEBI:59789"/>
    </ligand>
</feature>
<feature type="binding site" evidence="1">
    <location>
        <position position="45"/>
    </location>
    <ligand>
        <name>S-adenosyl-L-methionine</name>
        <dbReference type="ChEBI" id="CHEBI:59789"/>
    </ligand>
</feature>
<feature type="binding site" evidence="1">
    <location>
        <position position="66"/>
    </location>
    <ligand>
        <name>S-adenosyl-L-methionine</name>
        <dbReference type="ChEBI" id="CHEBI:59789"/>
    </ligand>
</feature>
<feature type="binding site" evidence="1">
    <location>
        <position position="123"/>
    </location>
    <ligand>
        <name>S-adenosyl-L-methionine</name>
        <dbReference type="ChEBI" id="CHEBI:59789"/>
    </ligand>
</feature>
<gene>
    <name evidence="1" type="primary">tpm</name>
    <name type="ordered locus">Sden_0541</name>
</gene>
<proteinExistence type="inferred from homology"/>
<comment type="catalytic activity">
    <reaction evidence="1">
        <text>S-adenosyl-L-methionine + a thiopurine = S-adenosyl-L-homocysteine + a thiopurine S-methylether.</text>
        <dbReference type="EC" id="2.1.1.67"/>
    </reaction>
</comment>
<comment type="subcellular location">
    <subcellularLocation>
        <location evidence="1">Cytoplasm</location>
    </subcellularLocation>
</comment>
<comment type="similarity">
    <text evidence="1">Belongs to the class I-like SAM-binding methyltransferase superfamily. TPMT family.</text>
</comment>
<keyword id="KW-0963">Cytoplasm</keyword>
<keyword id="KW-0489">Methyltransferase</keyword>
<keyword id="KW-1185">Reference proteome</keyword>
<keyword id="KW-0949">S-adenosyl-L-methionine</keyword>
<keyword id="KW-0808">Transferase</keyword>
<organism>
    <name type="scientific">Shewanella denitrificans (strain OS217 / ATCC BAA-1090 / DSM 15013)</name>
    <dbReference type="NCBI Taxonomy" id="318161"/>
    <lineage>
        <taxon>Bacteria</taxon>
        <taxon>Pseudomonadati</taxon>
        <taxon>Pseudomonadota</taxon>
        <taxon>Gammaproteobacteria</taxon>
        <taxon>Alteromonadales</taxon>
        <taxon>Shewanellaceae</taxon>
        <taxon>Shewanella</taxon>
    </lineage>
</organism>